<feature type="signal peptide" evidence="2">
    <location>
        <begin position="1"/>
        <end position="29"/>
    </location>
</feature>
<feature type="chain" id="PRO_5004308142" description="Serine protease DegP homolog" evidence="2">
    <location>
        <begin position="30"/>
        <end position="870"/>
    </location>
</feature>
<feature type="region of interest" description="Disordered" evidence="3">
    <location>
        <begin position="128"/>
        <end position="151"/>
    </location>
</feature>
<feature type="compositionally biased region" description="Basic residues" evidence="3">
    <location>
        <begin position="138"/>
        <end position="151"/>
    </location>
</feature>
<feature type="active site" description="Charge relay system" evidence="1">
    <location>
        <position position="328"/>
    </location>
</feature>
<feature type="active site" description="Charge relay system" evidence="1">
    <location>
        <position position="359"/>
    </location>
</feature>
<feature type="active site" description="Charge relay system" evidence="1">
    <location>
        <position position="437"/>
    </location>
</feature>
<name>DEGPH_PLAF7</name>
<dbReference type="EC" id="3.4.21.-" evidence="4"/>
<dbReference type="EMBL" id="AF541873">
    <property type="protein sequence ID" value="AAQ11372.1"/>
    <property type="molecule type" value="Genomic_DNA"/>
</dbReference>
<dbReference type="EMBL" id="AL844507">
    <property type="protein sequence ID" value="CAD51295.1"/>
    <property type="molecule type" value="Genomic_DNA"/>
</dbReference>
<dbReference type="RefSeq" id="XP_001349446.1">
    <property type="nucleotide sequence ID" value="XM_001349410.1"/>
</dbReference>
<dbReference type="SMR" id="Q8IAR5"/>
<dbReference type="FunCoup" id="Q8IAR5">
    <property type="interactions" value="6"/>
</dbReference>
<dbReference type="IntAct" id="Q8IAR5">
    <property type="interactions" value="6"/>
</dbReference>
<dbReference type="MINT" id="Q8IAR5"/>
<dbReference type="STRING" id="36329.Q8IAR5"/>
<dbReference type="MEROPS" id="S01.B87"/>
<dbReference type="PaxDb" id="5833-MAL8P1.126"/>
<dbReference type="EnsemblProtists" id="CAD51295">
    <property type="protein sequence ID" value="CAD51295"/>
    <property type="gene ID" value="PF3D7_0807700"/>
</dbReference>
<dbReference type="GeneID" id="2655249"/>
<dbReference type="KEGG" id="pfa:PF3D7_0807700"/>
<dbReference type="VEuPathDB" id="PlasmoDB:PF3D7_0807700"/>
<dbReference type="VEuPathDB" id="PlasmoDB:PfDd2_080012900"/>
<dbReference type="VEuPathDB" id="PlasmoDB:PfGB4_080012300"/>
<dbReference type="VEuPathDB" id="PlasmoDB:PfIT_080012800"/>
<dbReference type="VEuPathDB" id="PlasmoDB:PfKE01_080013300"/>
<dbReference type="VEuPathDB" id="PlasmoDB:PfKH02_080013100"/>
<dbReference type="VEuPathDB" id="PlasmoDB:PfNF166_080011800"/>
<dbReference type="VEuPathDB" id="PlasmoDB:PfNF54_080011700"/>
<dbReference type="VEuPathDB" id="PlasmoDB:PfSN01_080011800"/>
<dbReference type="HOGENOM" id="CLU_348683_0_0_1"/>
<dbReference type="InParanoid" id="Q8IAR5"/>
<dbReference type="OMA" id="KFHERAP"/>
<dbReference type="OrthoDB" id="4217619at2759"/>
<dbReference type="PhylomeDB" id="Q8IAR5"/>
<dbReference type="BRENDA" id="3.4.21.107">
    <property type="organism ID" value="4889"/>
</dbReference>
<dbReference type="Proteomes" id="UP000001450">
    <property type="component" value="Chromosome 8"/>
</dbReference>
<dbReference type="GO" id="GO:0005829">
    <property type="term" value="C:cytosol"/>
    <property type="evidence" value="ECO:0000314"/>
    <property type="project" value="GeneDB"/>
</dbReference>
<dbReference type="GO" id="GO:0044164">
    <property type="term" value="C:host cell cytosol"/>
    <property type="evidence" value="ECO:0000314"/>
    <property type="project" value="GeneDB"/>
</dbReference>
<dbReference type="GO" id="GO:0020002">
    <property type="term" value="C:host cell plasma membrane"/>
    <property type="evidence" value="ECO:0000314"/>
    <property type="project" value="GeneDB"/>
</dbReference>
<dbReference type="GO" id="GO:0016020">
    <property type="term" value="C:membrane"/>
    <property type="evidence" value="ECO:0007669"/>
    <property type="project" value="UniProtKB-KW"/>
</dbReference>
<dbReference type="GO" id="GO:0020003">
    <property type="term" value="C:symbiont-containing vacuole"/>
    <property type="evidence" value="ECO:0000314"/>
    <property type="project" value="GeneDB"/>
</dbReference>
<dbReference type="GO" id="GO:0004252">
    <property type="term" value="F:serine-type endopeptidase activity"/>
    <property type="evidence" value="ECO:0000318"/>
    <property type="project" value="GO_Central"/>
</dbReference>
<dbReference type="GO" id="GO:0006508">
    <property type="term" value="P:proteolysis"/>
    <property type="evidence" value="ECO:0000314"/>
    <property type="project" value="GeneDB"/>
</dbReference>
<dbReference type="GO" id="GO:0006979">
    <property type="term" value="P:response to oxidative stress"/>
    <property type="evidence" value="ECO:0000316"/>
    <property type="project" value="GeneDB"/>
</dbReference>
<dbReference type="GO" id="GO:0009266">
    <property type="term" value="P:response to temperature stimulus"/>
    <property type="evidence" value="ECO:0000316"/>
    <property type="project" value="GeneDB"/>
</dbReference>
<dbReference type="FunFam" id="2.40.10.10:FF:000012">
    <property type="entry name" value="protease Do-like 9"/>
    <property type="match status" value="1"/>
</dbReference>
<dbReference type="FunFam" id="2.40.10.10:FF:000161">
    <property type="entry name" value="Serine protease DegP"/>
    <property type="match status" value="1"/>
</dbReference>
<dbReference type="Gene3D" id="3.20.190.20">
    <property type="match status" value="1"/>
</dbReference>
<dbReference type="Gene3D" id="2.40.10.10">
    <property type="entry name" value="Trypsin-like serine proteases"/>
    <property type="match status" value="2"/>
</dbReference>
<dbReference type="InterPro" id="IPR041517">
    <property type="entry name" value="DEGP_PDZ"/>
</dbReference>
<dbReference type="InterPro" id="IPR046449">
    <property type="entry name" value="DEGP_PDZ_sf"/>
</dbReference>
<dbReference type="InterPro" id="IPR009003">
    <property type="entry name" value="Peptidase_S1_PA"/>
</dbReference>
<dbReference type="InterPro" id="IPR043504">
    <property type="entry name" value="Peptidase_S1_PA_chymotrypsin"/>
</dbReference>
<dbReference type="InterPro" id="IPR001940">
    <property type="entry name" value="Peptidase_S1C"/>
</dbReference>
<dbReference type="PANTHER" id="PTHR45980">
    <property type="match status" value="1"/>
</dbReference>
<dbReference type="PANTHER" id="PTHR45980:SF9">
    <property type="entry name" value="PROTEASE DO-LIKE 10, MITOCHONDRIAL-RELATED"/>
    <property type="match status" value="1"/>
</dbReference>
<dbReference type="Pfam" id="PF17815">
    <property type="entry name" value="PDZ_3"/>
    <property type="match status" value="1"/>
</dbReference>
<dbReference type="Pfam" id="PF13365">
    <property type="entry name" value="Trypsin_2"/>
    <property type="match status" value="1"/>
</dbReference>
<dbReference type="PRINTS" id="PR00834">
    <property type="entry name" value="PROTEASES2C"/>
</dbReference>
<dbReference type="SUPFAM" id="SSF50494">
    <property type="entry name" value="Trypsin-like serine proteases"/>
    <property type="match status" value="1"/>
</dbReference>
<proteinExistence type="evidence at protein level"/>
<keyword id="KW-0963">Cytoplasm</keyword>
<keyword id="KW-1032">Host cell membrane</keyword>
<keyword id="KW-1035">Host cytoplasm</keyword>
<keyword id="KW-1043">Host membrane</keyword>
<keyword id="KW-0378">Hydrolase</keyword>
<keyword id="KW-0472">Membrane</keyword>
<keyword id="KW-0645">Protease</keyword>
<keyword id="KW-1185">Reference proteome</keyword>
<keyword id="KW-0720">Serine protease</keyword>
<keyword id="KW-0732">Signal</keyword>
<protein>
    <recommendedName>
        <fullName evidence="5">Serine protease DegP homolog</fullName>
        <ecNumber evidence="4">3.4.21.-</ecNumber>
    </recommendedName>
</protein>
<accession>Q8IAR5</accession>
<accession>Q687H5</accession>
<evidence type="ECO:0000250" key="1">
    <source>
        <dbReference type="UniProtKB" id="P0C0V0"/>
    </source>
</evidence>
<evidence type="ECO:0000255" key="2"/>
<evidence type="ECO:0000256" key="3">
    <source>
        <dbReference type="SAM" id="MobiDB-lite"/>
    </source>
</evidence>
<evidence type="ECO:0000269" key="4">
    <source>
    </source>
</evidence>
<evidence type="ECO:0000303" key="5">
    <source>
    </source>
</evidence>
<evidence type="ECO:0000305" key="6"/>
<evidence type="ECO:0000312" key="7">
    <source>
        <dbReference type="EMBL" id="AAQ11372.1"/>
    </source>
</evidence>
<evidence type="ECO:0000312" key="8">
    <source>
        <dbReference type="EMBL" id="CAD51295.1"/>
    </source>
</evidence>
<evidence type="ECO:0000312" key="9">
    <source>
        <dbReference type="Proteomes" id="UP000001450"/>
    </source>
</evidence>
<gene>
    <name evidence="5" type="primary">DegP</name>
    <name evidence="8" type="ORF">PF3D7_0807700</name>
</gene>
<organism evidence="9">
    <name type="scientific">Plasmodium falciparum (isolate 3D7)</name>
    <dbReference type="NCBI Taxonomy" id="36329"/>
    <lineage>
        <taxon>Eukaryota</taxon>
        <taxon>Sar</taxon>
        <taxon>Alveolata</taxon>
        <taxon>Apicomplexa</taxon>
        <taxon>Aconoidasida</taxon>
        <taxon>Haemosporida</taxon>
        <taxon>Plasmodiidae</taxon>
        <taxon>Plasmodium</taxon>
        <taxon>Plasmodium (Laverania)</taxon>
    </lineage>
</organism>
<reference evidence="7" key="1">
    <citation type="submission" date="2002-08" db="EMBL/GenBank/DDBJ databases">
        <title>A new Plasmodium falciparum serine protease like coding sequence.</title>
        <authorList>
            <person name="Blisnick T."/>
            <person name="Thalamy A."/>
            <person name="Braun-Breton C."/>
        </authorList>
    </citation>
    <scope>NUCLEOTIDE SEQUENCE [GENOMIC DNA]</scope>
    <source>
        <strain evidence="7">3D7</strain>
    </source>
</reference>
<reference evidence="9" key="2">
    <citation type="journal article" date="2002" name="Nature">
        <title>Genome sequence of the human malaria parasite Plasmodium falciparum.</title>
        <authorList>
            <person name="Gardner M.J."/>
            <person name="Hall N."/>
            <person name="Fung E."/>
            <person name="White O."/>
            <person name="Berriman M."/>
            <person name="Hyman R.W."/>
            <person name="Carlton J.M."/>
            <person name="Pain A."/>
            <person name="Nelson K.E."/>
            <person name="Bowman S."/>
            <person name="Paulsen I.T."/>
            <person name="James K.D."/>
            <person name="Eisen J.A."/>
            <person name="Rutherford K.M."/>
            <person name="Salzberg S.L."/>
            <person name="Craig A."/>
            <person name="Kyes S."/>
            <person name="Chan M.-S."/>
            <person name="Nene V."/>
            <person name="Shallom S.J."/>
            <person name="Suh B."/>
            <person name="Peterson J."/>
            <person name="Angiuoli S."/>
            <person name="Pertea M."/>
            <person name="Allen J."/>
            <person name="Selengut J."/>
            <person name="Haft D."/>
            <person name="Mather M.W."/>
            <person name="Vaidya A.B."/>
            <person name="Martin D.M.A."/>
            <person name="Fairlamb A.H."/>
            <person name="Fraunholz M.J."/>
            <person name="Roos D.S."/>
            <person name="Ralph S.A."/>
            <person name="McFadden G.I."/>
            <person name="Cummings L.M."/>
            <person name="Subramanian G.M."/>
            <person name="Mungall C."/>
            <person name="Venter J.C."/>
            <person name="Carucci D.J."/>
            <person name="Hoffman S.L."/>
            <person name="Newbold C."/>
            <person name="Davis R.W."/>
            <person name="Fraser C.M."/>
            <person name="Barrell B.G."/>
        </authorList>
    </citation>
    <scope>NUCLEOTIDE SEQUENCE [LARGE SCALE GENOMIC DNA]</scope>
    <source>
        <strain evidence="9">3D7</strain>
    </source>
</reference>
<reference evidence="9" key="3">
    <citation type="journal article" date="2002" name="Nature">
        <title>Sequence of Plasmodium falciparum chromosomes 1, 3-9 and 13.</title>
        <authorList>
            <person name="Hall N."/>
            <person name="Pain A."/>
            <person name="Berriman M."/>
            <person name="Churcher C.M."/>
            <person name="Harris B."/>
            <person name="Harris D."/>
            <person name="Mungall K.L."/>
            <person name="Bowman S."/>
            <person name="Atkin R."/>
            <person name="Baker S."/>
            <person name="Barron A."/>
            <person name="Brooks K."/>
            <person name="Buckee C.O."/>
            <person name="Burrows C."/>
            <person name="Cherevach I."/>
            <person name="Chillingworth C."/>
            <person name="Chillingworth T."/>
            <person name="Christodoulou Z."/>
            <person name="Clark L."/>
            <person name="Clark R."/>
            <person name="Corton C."/>
            <person name="Cronin A."/>
            <person name="Davies R.M."/>
            <person name="Davis P."/>
            <person name="Dear P."/>
            <person name="Dearden F."/>
            <person name="Doggett J."/>
            <person name="Feltwell T."/>
            <person name="Goble A."/>
            <person name="Goodhead I."/>
            <person name="Gwilliam R."/>
            <person name="Hamlin N."/>
            <person name="Hance Z."/>
            <person name="Harper D."/>
            <person name="Hauser H."/>
            <person name="Hornsby T."/>
            <person name="Holroyd S."/>
            <person name="Horrocks P."/>
            <person name="Humphray S."/>
            <person name="Jagels K."/>
            <person name="James K.D."/>
            <person name="Johnson D."/>
            <person name="Kerhornou A."/>
            <person name="Knights A."/>
            <person name="Konfortov B."/>
            <person name="Kyes S."/>
            <person name="Larke N."/>
            <person name="Lawson D."/>
            <person name="Lennard N."/>
            <person name="Line A."/>
            <person name="Maddison M."/>
            <person name="Mclean J."/>
            <person name="Mooney P."/>
            <person name="Moule S."/>
            <person name="Murphy L."/>
            <person name="Oliver K."/>
            <person name="Ormond D."/>
            <person name="Price C."/>
            <person name="Quail M.A."/>
            <person name="Rabbinowitsch E."/>
            <person name="Rajandream M.A."/>
            <person name="Rutter S."/>
            <person name="Rutherford K.M."/>
            <person name="Sanders M."/>
            <person name="Simmonds M."/>
            <person name="Seeger K."/>
            <person name="Sharp S."/>
            <person name="Smith R."/>
            <person name="Squares R."/>
            <person name="Squares S."/>
            <person name="Stevens K."/>
            <person name="Taylor K."/>
            <person name="Tivey A."/>
            <person name="Unwin L."/>
            <person name="Whitehead S."/>
            <person name="Woodward J.R."/>
            <person name="Sulston J.E."/>
            <person name="Craig A."/>
            <person name="Newbold C."/>
            <person name="Barrell B.G."/>
        </authorList>
    </citation>
    <scope>NUCLEOTIDE SEQUENCE [LARGE SCALE GENOMIC DNA]</scope>
    <source>
        <strain evidence="9">3D7</strain>
    </source>
</reference>
<reference evidence="6" key="4">
    <citation type="journal article" date="2014" name="FEBS J.">
        <title>A secretory multifunctional serine protease, DegP of Plasmodium falciparum, plays an important role in thermo-oxidative stress, parasite growth and development.</title>
        <authorList>
            <person name="Sharma S."/>
            <person name="Jadli M."/>
            <person name="Singh A."/>
            <person name="Arora K."/>
            <person name="Malhotra P."/>
        </authorList>
    </citation>
    <scope>FUNCTION</scope>
    <scope>CATALYTIC ACTIVITY</scope>
    <scope>SUBUNIT</scope>
    <scope>SUBCELLULAR LOCATION</scope>
    <scope>DEVELOPMENTAL STAGE</scope>
    <scope>INDUCTION</scope>
    <scope>DOMAIN</scope>
</reference>
<comment type="function">
    <text evidence="4">Serine protease which also acts as a protein chaperone (PubMed:24494818). Plays a role in the parasite development in host erythrocytes possibly by protecting it against thermal and oxidative stresses (PubMed:24494818).</text>
</comment>
<comment type="subunit">
    <text evidence="4">Oligomer; may form trimers or hexamers (PubMed:24494818). Forms a complex at least composed of DegP, ENO and HSP70 (PubMed:24494818).</text>
</comment>
<comment type="subcellular location">
    <subcellularLocation>
        <location evidence="4">Cytoplasm</location>
    </subcellularLocation>
    <subcellularLocation>
        <location evidence="4">Parasitophorous vacuole</location>
    </subcellularLocation>
    <subcellularLocation>
        <location evidence="4">Host cell membrane</location>
        <topology evidence="6">Peripheral membrane protein</topology>
    </subcellularLocation>
    <subcellularLocation>
        <location evidence="4">Host cytoplasm</location>
    </subcellularLocation>
    <text evidence="4">Localizes to the cytoplasm and cell membrane of host erythrocytes.</text>
</comment>
<comment type="developmental stage">
    <text evidence="4">During the asexual blood stage, expressed in trophozoites, schizonts and free merozoites (at protein level).</text>
</comment>
<comment type="induction">
    <text evidence="4">By heat and oxidative stresses in trophozoites and schizonts (at protein level).</text>
</comment>
<comment type="domain">
    <text evidence="4">The PDZ domain is dispensable for protease and chaperone activities.</text>
</comment>
<comment type="similarity">
    <text evidence="6">Belongs to the peptidase S1C family.</text>
</comment>
<sequence length="870" mass="101494">MDIIFCTPTYCKIMLMIIMLISLRTRCDTNNFLNCSVEKEEGEEEIISTNLKRINDDMNILGRILNDERNIKITDIVEMLQNEYDDKKKKKKKKKYIYRKKKSNNKINEINSVQHFNVKENILNEKKKNPLNDNFKNPKLRKHSPNNKKNKNKIGQIKFHIVGYDKKKITKYLTPSMISSIQKRLMNKNKKTNVNVNMSNGRVLPFFPKEYFLHSSTHEKKDKMATKKNNKEESIINERLLENLENISLSRTIKDIRGEEGNERKVKEEDNNIKEEGNSFKKYFKGVVKLYVDITEPNLEMIWQNYPPKSITGSGFIIEGHLIITNAHNISYSTRILIRKHGNSGKYEAKILYVAHDVDIAILTTDDKTFFDDVYALHFGALPSLKDEIITIGYPAGGDKLSVTEGIVSRIDVQYYKHSNYKFLLTQIDAPLNPGNSGGPALVRGKVVGICFQSYKVSNNISYIIPSTIISHFLLDIHKNKDYTGYAFLGVKYEPLENPSLREALGLEEMERKKIIKKNVGILITEVFEGHMSKQDDKYHDMDNKHHNVGDTHHNVGDTHHNVGDDHTDNLQGDTDYCTYILNSNIITSDKKNIYSDKKKKKIYSDNNNNNNNFNYYYNMHGEDEQSCYGLKKNDIILRVDGKDINNDGSVILRDNETVGFQHLFNEKFINDLCIIKIVRNKKIKSVMVKLYKVKYLLNQHNWDKRNKYFIYGGIVFSILTRSLYVYTQNPEINKLMLYNNFKKKSKDEIVVLKNILPTKITTGYYYTDSIVLRVNNIKVKNLKHLIELIEMTKYTNRLMYLKNNKHTLQSYINYYNTKITSLNINTIIHILILTTSGQKVPIVLNKRDVEKYNEEIKKIYSITRDRYVY</sequence>